<proteinExistence type="inferred from homology"/>
<reference key="1">
    <citation type="journal article" date="2003" name="Proc. Natl. Acad. Sci. U.S.A.">
        <title>The genome of Nanoarchaeum equitans: insights into early archaeal evolution and derived parasitism.</title>
        <authorList>
            <person name="Waters E."/>
            <person name="Hohn M.J."/>
            <person name="Ahel I."/>
            <person name="Graham D.E."/>
            <person name="Adams M.D."/>
            <person name="Barnstead M."/>
            <person name="Beeson K.Y."/>
            <person name="Bibbs L."/>
            <person name="Bolanos R."/>
            <person name="Keller M."/>
            <person name="Kretz K."/>
            <person name="Lin X."/>
            <person name="Mathur E."/>
            <person name="Ni J."/>
            <person name="Podar M."/>
            <person name="Richardson T."/>
            <person name="Sutton G.G."/>
            <person name="Simon M."/>
            <person name="Soell D."/>
            <person name="Stetter K.O."/>
            <person name="Short J.M."/>
            <person name="Noorderwier M."/>
        </authorList>
    </citation>
    <scope>NUCLEOTIDE SEQUENCE [LARGE SCALE GENOMIC DNA]</scope>
    <source>
        <strain>Kin4-M</strain>
    </source>
</reference>
<protein>
    <recommendedName>
        <fullName evidence="1">Large ribosomal subunit protein uL30</fullName>
    </recommendedName>
    <alternativeName>
        <fullName evidence="2">50S ribosomal protein L30</fullName>
    </alternativeName>
</protein>
<accession>Q74NH9</accession>
<evidence type="ECO:0000255" key="1">
    <source>
        <dbReference type="HAMAP-Rule" id="MF_01371"/>
    </source>
</evidence>
<evidence type="ECO:0000305" key="2"/>
<organism>
    <name type="scientific">Nanoarchaeum equitans (strain Kin4-M)</name>
    <dbReference type="NCBI Taxonomy" id="228908"/>
    <lineage>
        <taxon>Archaea</taxon>
        <taxon>Nanobdellota</taxon>
        <taxon>Candidatus Nanoarchaeia</taxon>
        <taxon>Nanoarchaeales</taxon>
        <taxon>Nanoarchaeaceae</taxon>
        <taxon>Nanoarchaeum</taxon>
    </lineage>
</organism>
<dbReference type="EMBL" id="AE017199">
    <property type="protein sequence ID" value="AAR39160.1"/>
    <property type="molecule type" value="Genomic_DNA"/>
</dbReference>
<dbReference type="SMR" id="Q74NH9"/>
<dbReference type="STRING" id="228908.NEQ311"/>
<dbReference type="EnsemblBacteria" id="AAR39160">
    <property type="protein sequence ID" value="AAR39160"/>
    <property type="gene ID" value="NEQ311"/>
</dbReference>
<dbReference type="KEGG" id="neq:NEQ311"/>
<dbReference type="PATRIC" id="fig|228908.8.peg.319"/>
<dbReference type="HOGENOM" id="CLU_055156_6_0_2"/>
<dbReference type="Proteomes" id="UP000000578">
    <property type="component" value="Chromosome"/>
</dbReference>
<dbReference type="GO" id="GO:0022625">
    <property type="term" value="C:cytosolic large ribosomal subunit"/>
    <property type="evidence" value="ECO:0007669"/>
    <property type="project" value="TreeGrafter"/>
</dbReference>
<dbReference type="GO" id="GO:0003723">
    <property type="term" value="F:RNA binding"/>
    <property type="evidence" value="ECO:0007669"/>
    <property type="project" value="TreeGrafter"/>
</dbReference>
<dbReference type="GO" id="GO:0003735">
    <property type="term" value="F:structural constituent of ribosome"/>
    <property type="evidence" value="ECO:0007669"/>
    <property type="project" value="InterPro"/>
</dbReference>
<dbReference type="GO" id="GO:0000463">
    <property type="term" value="P:maturation of LSU-rRNA from tricistronic rRNA transcript (SSU-rRNA, 5.8S rRNA, LSU-rRNA)"/>
    <property type="evidence" value="ECO:0007669"/>
    <property type="project" value="TreeGrafter"/>
</dbReference>
<dbReference type="GO" id="GO:0006412">
    <property type="term" value="P:translation"/>
    <property type="evidence" value="ECO:0007669"/>
    <property type="project" value="UniProtKB-UniRule"/>
</dbReference>
<dbReference type="CDD" id="cd01657">
    <property type="entry name" value="Ribosomal_L7_archeal_euk"/>
    <property type="match status" value="1"/>
</dbReference>
<dbReference type="Gene3D" id="1.10.15.30">
    <property type="match status" value="1"/>
</dbReference>
<dbReference type="Gene3D" id="3.30.1390.20">
    <property type="entry name" value="Ribosomal protein L30, ferredoxin-like fold domain"/>
    <property type="match status" value="1"/>
</dbReference>
<dbReference type="HAMAP" id="MF_01371_A">
    <property type="entry name" value="Ribosomal_uL30_A"/>
    <property type="match status" value="1"/>
</dbReference>
<dbReference type="InterPro" id="IPR036919">
    <property type="entry name" value="Ribo_uL30_ferredoxin-like_sf"/>
</dbReference>
<dbReference type="InterPro" id="IPR039699">
    <property type="entry name" value="Ribosomal_uL30"/>
</dbReference>
<dbReference type="InterPro" id="IPR005997">
    <property type="entry name" value="Ribosomal_uL30_arc"/>
</dbReference>
<dbReference type="InterPro" id="IPR035808">
    <property type="entry name" value="Ribosomal_uL30_euk_arc"/>
</dbReference>
<dbReference type="InterPro" id="IPR016082">
    <property type="entry name" value="Ribosomal_uL30_ferredoxin-like"/>
</dbReference>
<dbReference type="NCBIfam" id="NF004711">
    <property type="entry name" value="PRK06049.1"/>
    <property type="match status" value="1"/>
</dbReference>
<dbReference type="NCBIfam" id="TIGR01309">
    <property type="entry name" value="uL30_arch"/>
    <property type="match status" value="1"/>
</dbReference>
<dbReference type="PANTHER" id="PTHR11524">
    <property type="entry name" value="60S RIBOSOMAL PROTEIN L7"/>
    <property type="match status" value="1"/>
</dbReference>
<dbReference type="PANTHER" id="PTHR11524:SF16">
    <property type="entry name" value="LARGE RIBOSOMAL SUBUNIT PROTEIN UL30"/>
    <property type="match status" value="1"/>
</dbReference>
<dbReference type="Pfam" id="PF00327">
    <property type="entry name" value="Ribosomal_L30"/>
    <property type="match status" value="1"/>
</dbReference>
<dbReference type="SUPFAM" id="SSF55129">
    <property type="entry name" value="Ribosomal protein L30p/L7e"/>
    <property type="match status" value="1"/>
</dbReference>
<feature type="chain" id="PRO_0000273910" description="Large ribosomal subunit protein uL30">
    <location>
        <begin position="1"/>
        <end position="155"/>
    </location>
</feature>
<name>RL30_NANEQ</name>
<sequence length="155" mass="17979">MALYAIFRVRGRVDVRKDIEDTLKLLRVHRKNYLSIMPKTESIEGMIQKAKDYITWGEIDEKTLAELLKKRGRISRRKKLTLEYIKEKGFNSFEELAKALIEGKVTLKELGIKPFFRLRPPSKGYGKKGIKKHFNEGGALGYRGEKINDLILRAI</sequence>
<comment type="subunit">
    <text evidence="1">Part of the 50S ribosomal subunit.</text>
</comment>
<comment type="similarity">
    <text evidence="1">Belongs to the universal ribosomal protein uL30 family.</text>
</comment>
<keyword id="KW-1185">Reference proteome</keyword>
<keyword id="KW-0687">Ribonucleoprotein</keyword>
<keyword id="KW-0689">Ribosomal protein</keyword>
<gene>
    <name evidence="1" type="primary">rpl30</name>
    <name type="ordered locus">NEQ311</name>
</gene>